<accession>Q08DH3</accession>
<gene>
    <name type="primary">TRMT9B</name>
    <name type="synonym">KIAA1456</name>
    <name type="synonym">TRM9L</name>
</gene>
<sequence>MDHAAAQLEKQHVHDVYESTAPYFSDLQSKAWPRVRQFLQEQKPGSLIADIGCGTGKYLKVNSQVHTLGCDYCAPLVEIARSRGCEVMVCDNLNLPFRDQGFDAIISIGVIHHFSTKQRRIRAIKEMARVLVPGGQLMIYVWAMEQKNRHFEKQDVLVPWNKALCSQRLSESGQPGRKQECGHPERGYPYHPACSACHCSVCFEGRCNSKRSHSVDCDSVLAGTCCANISKEGEEENGFYNTLGKSFRSWFSSRSLDESTLRKQIEKVRPLKSTESWANSAISIQPSRHSSFDLGHPETLSAGEQNLDEEVFVEPSQGPREWLRAPTTCKQLNGDHPGVIRRNGDGNFLGGANAKESCVDEGNLEEGTASGSKLWRRISAADSTDSNPGDAISVEEQQPDVLDSRAFMRYYHVFREGELCGLLKESVSELHILSSGNDHGNWCVIAEKRESCD</sequence>
<dbReference type="EC" id="2.1.1.-"/>
<dbReference type="EMBL" id="BC123749">
    <property type="protein sequence ID" value="AAI23750.1"/>
    <property type="molecule type" value="mRNA"/>
</dbReference>
<dbReference type="RefSeq" id="NP_001070300.1">
    <property type="nucleotide sequence ID" value="NM_001076832.1"/>
</dbReference>
<dbReference type="RefSeq" id="XP_059738168.1">
    <property type="nucleotide sequence ID" value="XM_059882185.1"/>
</dbReference>
<dbReference type="RefSeq" id="XP_059738169.1">
    <property type="nucleotide sequence ID" value="XM_059882186.1"/>
</dbReference>
<dbReference type="SMR" id="Q08DH3"/>
<dbReference type="FunCoup" id="Q08DH3">
    <property type="interactions" value="13"/>
</dbReference>
<dbReference type="STRING" id="9913.ENSBTAP00000058249"/>
<dbReference type="PaxDb" id="9913-ENSBTAP00000011782"/>
<dbReference type="Ensembl" id="ENSBTAT00000011782.6">
    <property type="protein sequence ID" value="ENSBTAP00000011782.6"/>
    <property type="gene ID" value="ENSBTAG00000008950.7"/>
</dbReference>
<dbReference type="GeneID" id="510845"/>
<dbReference type="KEGG" id="bta:510845"/>
<dbReference type="CTD" id="57604"/>
<dbReference type="VEuPathDB" id="HostDB:ENSBTAG00000008950"/>
<dbReference type="VGNC" id="VGNC:111305">
    <property type="gene designation" value="TRMT9B"/>
</dbReference>
<dbReference type="eggNOG" id="KOG1331">
    <property type="taxonomic scope" value="Eukaryota"/>
</dbReference>
<dbReference type="GeneTree" id="ENSGT00940000160373"/>
<dbReference type="HOGENOM" id="CLU_029501_0_1_1"/>
<dbReference type="InParanoid" id="Q08DH3"/>
<dbReference type="OMA" id="HGNWCIV"/>
<dbReference type="OrthoDB" id="271595at2759"/>
<dbReference type="Proteomes" id="UP000009136">
    <property type="component" value="Chromosome 27"/>
</dbReference>
<dbReference type="Bgee" id="ENSBTAG00000008950">
    <property type="expression patterns" value="Expressed in oviduct epithelium and 81 other cell types or tissues"/>
</dbReference>
<dbReference type="GO" id="GO:0005737">
    <property type="term" value="C:cytoplasm"/>
    <property type="evidence" value="ECO:0000318"/>
    <property type="project" value="GO_Central"/>
</dbReference>
<dbReference type="GO" id="GO:0005634">
    <property type="term" value="C:nucleus"/>
    <property type="evidence" value="ECO:0000318"/>
    <property type="project" value="GO_Central"/>
</dbReference>
<dbReference type="GO" id="GO:0008757">
    <property type="term" value="F:S-adenosylmethionine-dependent methyltransferase activity"/>
    <property type="evidence" value="ECO:0007669"/>
    <property type="project" value="InterPro"/>
</dbReference>
<dbReference type="GO" id="GO:0106335">
    <property type="term" value="F:tRNA (5-carboxymethyluridine(34)-5-O)-methyltransferase activity"/>
    <property type="evidence" value="ECO:0000318"/>
    <property type="project" value="GO_Central"/>
</dbReference>
<dbReference type="GO" id="GO:0000049">
    <property type="term" value="F:tRNA binding"/>
    <property type="evidence" value="ECO:0000318"/>
    <property type="project" value="GO_Central"/>
</dbReference>
<dbReference type="GO" id="GO:0030488">
    <property type="term" value="P:tRNA methylation"/>
    <property type="evidence" value="ECO:0000318"/>
    <property type="project" value="GO_Central"/>
</dbReference>
<dbReference type="GO" id="GO:0002098">
    <property type="term" value="P:tRNA wobble uridine modification"/>
    <property type="evidence" value="ECO:0000318"/>
    <property type="project" value="GO_Central"/>
</dbReference>
<dbReference type="CDD" id="cd02440">
    <property type="entry name" value="AdoMet_MTases"/>
    <property type="match status" value="1"/>
</dbReference>
<dbReference type="FunFam" id="3.40.50.150:FF:000154">
    <property type="entry name" value="Probable tRNA methyltransferase 9B"/>
    <property type="match status" value="1"/>
</dbReference>
<dbReference type="FunFam" id="3.40.50.150:FF:000214">
    <property type="entry name" value="Probable tRNA methyltransferase 9B"/>
    <property type="match status" value="1"/>
</dbReference>
<dbReference type="Gene3D" id="3.40.50.150">
    <property type="entry name" value="Vaccinia Virus protein VP39"/>
    <property type="match status" value="2"/>
</dbReference>
<dbReference type="InterPro" id="IPR051422">
    <property type="entry name" value="AlkB_tRNA_MeTrf/Diox"/>
</dbReference>
<dbReference type="InterPro" id="IPR013216">
    <property type="entry name" value="Methyltransf_11"/>
</dbReference>
<dbReference type="InterPro" id="IPR029063">
    <property type="entry name" value="SAM-dependent_MTases_sf"/>
</dbReference>
<dbReference type="PANTHER" id="PTHR13069">
    <property type="entry name" value="ALKYLATED DNA REPAIR PROTEIN ALKB HOMOLOG 8"/>
    <property type="match status" value="1"/>
</dbReference>
<dbReference type="PANTHER" id="PTHR13069:SF36">
    <property type="entry name" value="TRNA METHYLTRANSFERASE 9B-RELATED"/>
    <property type="match status" value="1"/>
</dbReference>
<dbReference type="Pfam" id="PF08241">
    <property type="entry name" value="Methyltransf_11"/>
    <property type="match status" value="1"/>
</dbReference>
<dbReference type="SUPFAM" id="SSF53335">
    <property type="entry name" value="S-adenosyl-L-methionine-dependent methyltransferases"/>
    <property type="match status" value="1"/>
</dbReference>
<protein>
    <recommendedName>
        <fullName>Probable tRNA methyltransferase 9B</fullName>
    </recommendedName>
    <alternativeName>
        <fullName>Probable tRNA methyltransferase 9-like protein</fullName>
        <ecNumber>2.1.1.-</ecNumber>
    </alternativeName>
</protein>
<feature type="chain" id="PRO_0000328791" description="Probable tRNA methyltransferase 9B">
    <location>
        <begin position="1"/>
        <end position="453"/>
    </location>
</feature>
<feature type="modified residue" description="Phosphoserine" evidence="1">
    <location>
        <position position="214"/>
    </location>
</feature>
<comment type="function">
    <text evidence="2">May modify wobble uridines in specific arginine and glutamic acid tRNAs. Acts as a tumor suppressor by promoting the expression of LIN9 (By similarity).</text>
</comment>
<comment type="similarity">
    <text evidence="3">Belongs to the methyltransferase superfamily.</text>
</comment>
<keyword id="KW-0489">Methyltransferase</keyword>
<keyword id="KW-0597">Phosphoprotein</keyword>
<keyword id="KW-1185">Reference proteome</keyword>
<keyword id="KW-0949">S-adenosyl-L-methionine</keyword>
<keyword id="KW-0808">Transferase</keyword>
<keyword id="KW-0819">tRNA processing</keyword>
<name>TRM9B_BOVIN</name>
<reference key="1">
    <citation type="submission" date="2006-09" db="EMBL/GenBank/DDBJ databases">
        <authorList>
            <consortium name="NIH - Mammalian Gene Collection (MGC) project"/>
        </authorList>
    </citation>
    <scope>NUCLEOTIDE SEQUENCE [LARGE SCALE MRNA]</scope>
    <source>
        <strain>Hereford</strain>
        <tissue>Brain cortex</tissue>
    </source>
</reference>
<proteinExistence type="evidence at transcript level"/>
<evidence type="ECO:0000250" key="1">
    <source>
        <dbReference type="UniProtKB" id="Q80WQ4"/>
    </source>
</evidence>
<evidence type="ECO:0000250" key="2">
    <source>
        <dbReference type="UniProtKB" id="Q9P272"/>
    </source>
</evidence>
<evidence type="ECO:0000305" key="3"/>
<organism>
    <name type="scientific">Bos taurus</name>
    <name type="common">Bovine</name>
    <dbReference type="NCBI Taxonomy" id="9913"/>
    <lineage>
        <taxon>Eukaryota</taxon>
        <taxon>Metazoa</taxon>
        <taxon>Chordata</taxon>
        <taxon>Craniata</taxon>
        <taxon>Vertebrata</taxon>
        <taxon>Euteleostomi</taxon>
        <taxon>Mammalia</taxon>
        <taxon>Eutheria</taxon>
        <taxon>Laurasiatheria</taxon>
        <taxon>Artiodactyla</taxon>
        <taxon>Ruminantia</taxon>
        <taxon>Pecora</taxon>
        <taxon>Bovidae</taxon>
        <taxon>Bovinae</taxon>
        <taxon>Bos</taxon>
    </lineage>
</organism>